<sequence length="208" mass="22917">MDTFKQISGRIAPMLEPNIDTDVIMPKQFLKGIDRQGLDKGVFFDRRFMAGGQPNPDFILNMPGWQSATFLLVGPNFGCGSSREHAVWGLKQLGVRGLIGSTFAGIFDDNCQRNGILTVSLDEPALARLAQLAASADTNSITVSLDRCEITTAEETISFVISELKRAMLAVGEDAIAWTLQYLPEIENFEVAHYSRRPWLKRPASPLG</sequence>
<reference key="1">
    <citation type="journal article" date="2005" name="Nucleic Acids Res.">
        <title>The genome sequence of Salmonella enterica serovar Choleraesuis, a highly invasive and resistant zoonotic pathogen.</title>
        <authorList>
            <person name="Chiu C.-H."/>
            <person name="Tang P."/>
            <person name="Chu C."/>
            <person name="Hu S."/>
            <person name="Bao Q."/>
            <person name="Yu J."/>
            <person name="Chou Y.-Y."/>
            <person name="Wang H.-S."/>
            <person name="Lee Y.-S."/>
        </authorList>
    </citation>
    <scope>NUCLEOTIDE SEQUENCE [LARGE SCALE GENOMIC DNA]</scope>
    <source>
        <strain>SC-B67</strain>
    </source>
</reference>
<dbReference type="EC" id="4.2.1.33" evidence="1"/>
<dbReference type="EMBL" id="AE017220">
    <property type="protein sequence ID" value="AAX64281.1"/>
    <property type="molecule type" value="Genomic_DNA"/>
</dbReference>
<dbReference type="SMR" id="Q57SN0"/>
<dbReference type="KEGG" id="sec:SCH_0375"/>
<dbReference type="HOGENOM" id="CLU_081378_0_3_6"/>
<dbReference type="UniPathway" id="UPA00048">
    <property type="reaction ID" value="UER00071"/>
</dbReference>
<dbReference type="Proteomes" id="UP000000538">
    <property type="component" value="Chromosome"/>
</dbReference>
<dbReference type="GO" id="GO:0009316">
    <property type="term" value="C:3-isopropylmalate dehydratase complex"/>
    <property type="evidence" value="ECO:0007669"/>
    <property type="project" value="InterPro"/>
</dbReference>
<dbReference type="GO" id="GO:0003861">
    <property type="term" value="F:3-isopropylmalate dehydratase activity"/>
    <property type="evidence" value="ECO:0007669"/>
    <property type="project" value="UniProtKB-UniRule"/>
</dbReference>
<dbReference type="GO" id="GO:0009098">
    <property type="term" value="P:L-leucine biosynthetic process"/>
    <property type="evidence" value="ECO:0007669"/>
    <property type="project" value="UniProtKB-UniRule"/>
</dbReference>
<dbReference type="CDD" id="cd01577">
    <property type="entry name" value="IPMI_Swivel"/>
    <property type="match status" value="1"/>
</dbReference>
<dbReference type="Gene3D" id="3.20.19.10">
    <property type="entry name" value="Aconitase, domain 4"/>
    <property type="match status" value="1"/>
</dbReference>
<dbReference type="HAMAP" id="MF_01031">
    <property type="entry name" value="LeuD_type1"/>
    <property type="match status" value="1"/>
</dbReference>
<dbReference type="InterPro" id="IPR004431">
    <property type="entry name" value="3-IsopropMal_deHydase_ssu"/>
</dbReference>
<dbReference type="InterPro" id="IPR015928">
    <property type="entry name" value="Aconitase/3IPM_dehydase_swvl"/>
</dbReference>
<dbReference type="InterPro" id="IPR000573">
    <property type="entry name" value="AconitaseA/IPMdHydase_ssu_swvl"/>
</dbReference>
<dbReference type="InterPro" id="IPR033940">
    <property type="entry name" value="IPMI_Swivel"/>
</dbReference>
<dbReference type="InterPro" id="IPR050075">
    <property type="entry name" value="LeuD"/>
</dbReference>
<dbReference type="NCBIfam" id="TIGR00171">
    <property type="entry name" value="leuD"/>
    <property type="match status" value="1"/>
</dbReference>
<dbReference type="NCBIfam" id="NF002458">
    <property type="entry name" value="PRK01641.1"/>
    <property type="match status" value="1"/>
</dbReference>
<dbReference type="PANTHER" id="PTHR43345:SF5">
    <property type="entry name" value="3-ISOPROPYLMALATE DEHYDRATASE SMALL SUBUNIT"/>
    <property type="match status" value="1"/>
</dbReference>
<dbReference type="PANTHER" id="PTHR43345">
    <property type="entry name" value="3-ISOPROPYLMALATE DEHYDRATASE SMALL SUBUNIT 2-RELATED-RELATED"/>
    <property type="match status" value="1"/>
</dbReference>
<dbReference type="Pfam" id="PF00694">
    <property type="entry name" value="Aconitase_C"/>
    <property type="match status" value="1"/>
</dbReference>
<dbReference type="SUPFAM" id="SSF52016">
    <property type="entry name" value="LeuD/IlvD-like"/>
    <property type="match status" value="1"/>
</dbReference>
<organism>
    <name type="scientific">Salmonella choleraesuis (strain SC-B67)</name>
    <dbReference type="NCBI Taxonomy" id="321314"/>
    <lineage>
        <taxon>Bacteria</taxon>
        <taxon>Pseudomonadati</taxon>
        <taxon>Pseudomonadota</taxon>
        <taxon>Gammaproteobacteria</taxon>
        <taxon>Enterobacterales</taxon>
        <taxon>Enterobacteriaceae</taxon>
        <taxon>Salmonella</taxon>
    </lineage>
</organism>
<name>LEUD2_SALCH</name>
<feature type="chain" id="PRO_0000141872" description="3-isopropylmalate dehydratase small subunit 2">
    <location>
        <begin position="1"/>
        <end position="208"/>
    </location>
</feature>
<evidence type="ECO:0000255" key="1">
    <source>
        <dbReference type="HAMAP-Rule" id="MF_01031"/>
    </source>
</evidence>
<comment type="function">
    <text evidence="1">Catalyzes the isomerization between 2-isopropylmalate and 3-isopropylmalate, via the formation of 2-isopropylmaleate.</text>
</comment>
<comment type="catalytic activity">
    <reaction evidence="1">
        <text>(2R,3S)-3-isopropylmalate = (2S)-2-isopropylmalate</text>
        <dbReference type="Rhea" id="RHEA:32287"/>
        <dbReference type="ChEBI" id="CHEBI:1178"/>
        <dbReference type="ChEBI" id="CHEBI:35121"/>
        <dbReference type="EC" id="4.2.1.33"/>
    </reaction>
</comment>
<comment type="pathway">
    <text evidence="1">Amino-acid biosynthesis; L-leucine biosynthesis; L-leucine from 3-methyl-2-oxobutanoate: step 2/4.</text>
</comment>
<comment type="subunit">
    <text evidence="1">Heterodimer of LeuC and LeuD.</text>
</comment>
<comment type="similarity">
    <text evidence="1">Belongs to the LeuD family. LeuD type 1 subfamily.</text>
</comment>
<protein>
    <recommendedName>
        <fullName evidence="1">3-isopropylmalate dehydratase small subunit 2</fullName>
        <ecNumber evidence="1">4.2.1.33</ecNumber>
    </recommendedName>
    <alternativeName>
        <fullName evidence="1">Alpha-IPM isomerase 2</fullName>
        <shortName evidence="1">IPMI 2</shortName>
    </alternativeName>
    <alternativeName>
        <fullName evidence="1">Isopropylmalate isomerase 2</fullName>
    </alternativeName>
</protein>
<keyword id="KW-0028">Amino-acid biosynthesis</keyword>
<keyword id="KW-0100">Branched-chain amino acid biosynthesis</keyword>
<keyword id="KW-0432">Leucine biosynthesis</keyword>
<keyword id="KW-0456">Lyase</keyword>
<proteinExistence type="inferred from homology"/>
<accession>Q57SN0</accession>
<gene>
    <name evidence="1" type="primary">leuD2</name>
    <name type="ordered locus">SCH_0375</name>
</gene>